<name>MRAY_BACCQ</name>
<keyword id="KW-0131">Cell cycle</keyword>
<keyword id="KW-0132">Cell division</keyword>
<keyword id="KW-1003">Cell membrane</keyword>
<keyword id="KW-0133">Cell shape</keyword>
<keyword id="KW-0961">Cell wall biogenesis/degradation</keyword>
<keyword id="KW-0460">Magnesium</keyword>
<keyword id="KW-0472">Membrane</keyword>
<keyword id="KW-0479">Metal-binding</keyword>
<keyword id="KW-0573">Peptidoglycan synthesis</keyword>
<keyword id="KW-0808">Transferase</keyword>
<keyword id="KW-0812">Transmembrane</keyword>
<keyword id="KW-1133">Transmembrane helix</keyword>
<reference key="1">
    <citation type="journal article" date="2009" name="J. Bacteriol.">
        <title>Complete genome sequence of the extremophilic Bacillus cereus strain Q1 with industrial applications.</title>
        <authorList>
            <person name="Xiong Z."/>
            <person name="Jiang Y."/>
            <person name="Qi D."/>
            <person name="Lu H."/>
            <person name="Yang F."/>
            <person name="Yang J."/>
            <person name="Chen L."/>
            <person name="Sun L."/>
            <person name="Xu X."/>
            <person name="Xue Y."/>
            <person name="Zhu Y."/>
            <person name="Jin Q."/>
        </authorList>
    </citation>
    <scope>NUCLEOTIDE SEQUENCE [LARGE SCALE GENOMIC DNA]</scope>
    <source>
        <strain>Q1</strain>
    </source>
</reference>
<feature type="chain" id="PRO_1000117163" description="Phospho-N-acetylmuramoyl-pentapeptide-transferase">
    <location>
        <begin position="1"/>
        <end position="324"/>
    </location>
</feature>
<feature type="transmembrane region" description="Helical" evidence="1">
    <location>
        <begin position="5"/>
        <end position="25"/>
    </location>
</feature>
<feature type="transmembrane region" description="Helical" evidence="1">
    <location>
        <begin position="52"/>
        <end position="72"/>
    </location>
</feature>
<feature type="transmembrane region" description="Helical" evidence="1">
    <location>
        <begin position="77"/>
        <end position="97"/>
    </location>
</feature>
<feature type="transmembrane region" description="Helical" evidence="1">
    <location>
        <begin position="122"/>
        <end position="142"/>
    </location>
</feature>
<feature type="transmembrane region" description="Helical" evidence="1">
    <location>
        <begin position="149"/>
        <end position="169"/>
    </location>
</feature>
<feature type="transmembrane region" description="Helical" evidence="1">
    <location>
        <begin position="176"/>
        <end position="196"/>
    </location>
</feature>
<feature type="transmembrane region" description="Helical" evidence="1">
    <location>
        <begin position="201"/>
        <end position="221"/>
    </location>
</feature>
<feature type="transmembrane region" description="Helical" evidence="1">
    <location>
        <begin position="227"/>
        <end position="247"/>
    </location>
</feature>
<feature type="transmembrane region" description="Helical" evidence="1">
    <location>
        <begin position="253"/>
        <end position="273"/>
    </location>
</feature>
<feature type="transmembrane region" description="Helical" evidence="1">
    <location>
        <begin position="302"/>
        <end position="322"/>
    </location>
</feature>
<protein>
    <recommendedName>
        <fullName evidence="1">Phospho-N-acetylmuramoyl-pentapeptide-transferase</fullName>
        <ecNumber evidence="1">2.7.8.13</ecNumber>
    </recommendedName>
    <alternativeName>
        <fullName evidence="1">UDP-MurNAc-pentapeptide phosphotransferase</fullName>
    </alternativeName>
</protein>
<gene>
    <name evidence="1" type="primary">mraY</name>
    <name type="ordered locus">BCQ_3699</name>
</gene>
<comment type="function">
    <text evidence="1">Catalyzes the initial step of the lipid cycle reactions in the biosynthesis of the cell wall peptidoglycan: transfers peptidoglycan precursor phospho-MurNAc-pentapeptide from UDP-MurNAc-pentapeptide onto the lipid carrier undecaprenyl phosphate, yielding undecaprenyl-pyrophosphoryl-MurNAc-pentapeptide, known as lipid I.</text>
</comment>
<comment type="catalytic activity">
    <reaction evidence="1">
        <text>UDP-N-acetyl-alpha-D-muramoyl-L-alanyl-gamma-D-glutamyl-meso-2,6-diaminopimeloyl-D-alanyl-D-alanine + di-trans,octa-cis-undecaprenyl phosphate = di-trans,octa-cis-undecaprenyl diphospho-N-acetyl-alpha-D-muramoyl-L-alanyl-D-glutamyl-meso-2,6-diaminopimeloyl-D-alanyl-D-alanine + UMP</text>
        <dbReference type="Rhea" id="RHEA:28386"/>
        <dbReference type="ChEBI" id="CHEBI:57865"/>
        <dbReference type="ChEBI" id="CHEBI:60392"/>
        <dbReference type="ChEBI" id="CHEBI:61386"/>
        <dbReference type="ChEBI" id="CHEBI:61387"/>
        <dbReference type="EC" id="2.7.8.13"/>
    </reaction>
</comment>
<comment type="cofactor">
    <cofactor evidence="1">
        <name>Mg(2+)</name>
        <dbReference type="ChEBI" id="CHEBI:18420"/>
    </cofactor>
</comment>
<comment type="pathway">
    <text evidence="1">Cell wall biogenesis; peptidoglycan biosynthesis.</text>
</comment>
<comment type="subcellular location">
    <subcellularLocation>
        <location evidence="1">Cell membrane</location>
        <topology evidence="1">Multi-pass membrane protein</topology>
    </subcellularLocation>
</comment>
<comment type="similarity">
    <text evidence="1">Belongs to the glycosyltransferase 4 family. MraY subfamily.</text>
</comment>
<proteinExistence type="inferred from homology"/>
<organism>
    <name type="scientific">Bacillus cereus (strain Q1)</name>
    <dbReference type="NCBI Taxonomy" id="361100"/>
    <lineage>
        <taxon>Bacteria</taxon>
        <taxon>Bacillati</taxon>
        <taxon>Bacillota</taxon>
        <taxon>Bacilli</taxon>
        <taxon>Bacillales</taxon>
        <taxon>Bacillaceae</taxon>
        <taxon>Bacillus</taxon>
        <taxon>Bacillus cereus group</taxon>
    </lineage>
</organism>
<accession>B9IVZ0</accession>
<evidence type="ECO:0000255" key="1">
    <source>
        <dbReference type="HAMAP-Rule" id="MF_00038"/>
    </source>
</evidence>
<dbReference type="EC" id="2.7.8.13" evidence="1"/>
<dbReference type="EMBL" id="CP000227">
    <property type="protein sequence ID" value="ACM14127.1"/>
    <property type="molecule type" value="Genomic_DNA"/>
</dbReference>
<dbReference type="SMR" id="B9IVZ0"/>
<dbReference type="KEGG" id="bcq:BCQ_3699"/>
<dbReference type="HOGENOM" id="CLU_023982_0_1_9"/>
<dbReference type="UniPathway" id="UPA00219"/>
<dbReference type="Proteomes" id="UP000000441">
    <property type="component" value="Chromosome"/>
</dbReference>
<dbReference type="GO" id="GO:0005886">
    <property type="term" value="C:plasma membrane"/>
    <property type="evidence" value="ECO:0007669"/>
    <property type="project" value="UniProtKB-SubCell"/>
</dbReference>
<dbReference type="GO" id="GO:0046872">
    <property type="term" value="F:metal ion binding"/>
    <property type="evidence" value="ECO:0007669"/>
    <property type="project" value="UniProtKB-KW"/>
</dbReference>
<dbReference type="GO" id="GO:0008963">
    <property type="term" value="F:phospho-N-acetylmuramoyl-pentapeptide-transferase activity"/>
    <property type="evidence" value="ECO:0007669"/>
    <property type="project" value="UniProtKB-UniRule"/>
</dbReference>
<dbReference type="GO" id="GO:0051992">
    <property type="term" value="F:UDP-N-acetylmuramoyl-L-alanyl-D-glutamyl-meso-2,6-diaminopimelyl-D-alanyl-D-alanine:undecaprenyl-phosphate transferase activity"/>
    <property type="evidence" value="ECO:0007669"/>
    <property type="project" value="RHEA"/>
</dbReference>
<dbReference type="GO" id="GO:0051301">
    <property type="term" value="P:cell division"/>
    <property type="evidence" value="ECO:0007669"/>
    <property type="project" value="UniProtKB-KW"/>
</dbReference>
<dbReference type="GO" id="GO:0071555">
    <property type="term" value="P:cell wall organization"/>
    <property type="evidence" value="ECO:0007669"/>
    <property type="project" value="UniProtKB-KW"/>
</dbReference>
<dbReference type="GO" id="GO:0009252">
    <property type="term" value="P:peptidoglycan biosynthetic process"/>
    <property type="evidence" value="ECO:0007669"/>
    <property type="project" value="UniProtKB-UniRule"/>
</dbReference>
<dbReference type="GO" id="GO:0008360">
    <property type="term" value="P:regulation of cell shape"/>
    <property type="evidence" value="ECO:0007669"/>
    <property type="project" value="UniProtKB-KW"/>
</dbReference>
<dbReference type="CDD" id="cd06852">
    <property type="entry name" value="GT_MraY"/>
    <property type="match status" value="1"/>
</dbReference>
<dbReference type="HAMAP" id="MF_00038">
    <property type="entry name" value="MraY"/>
    <property type="match status" value="1"/>
</dbReference>
<dbReference type="InterPro" id="IPR000715">
    <property type="entry name" value="Glycosyl_transferase_4"/>
</dbReference>
<dbReference type="InterPro" id="IPR003524">
    <property type="entry name" value="PNAcMuramoyl-5peptid_Trfase"/>
</dbReference>
<dbReference type="InterPro" id="IPR018480">
    <property type="entry name" value="PNAcMuramoyl-5peptid_Trfase_CS"/>
</dbReference>
<dbReference type="NCBIfam" id="TIGR00445">
    <property type="entry name" value="mraY"/>
    <property type="match status" value="1"/>
</dbReference>
<dbReference type="PANTHER" id="PTHR22926">
    <property type="entry name" value="PHOSPHO-N-ACETYLMURAMOYL-PENTAPEPTIDE-TRANSFERASE"/>
    <property type="match status" value="1"/>
</dbReference>
<dbReference type="PANTHER" id="PTHR22926:SF5">
    <property type="entry name" value="PHOSPHO-N-ACETYLMURAMOYL-PENTAPEPTIDE-TRANSFERASE HOMOLOG"/>
    <property type="match status" value="1"/>
</dbReference>
<dbReference type="Pfam" id="PF00953">
    <property type="entry name" value="Glycos_transf_4"/>
    <property type="match status" value="1"/>
</dbReference>
<dbReference type="Pfam" id="PF10555">
    <property type="entry name" value="MraY_sig1"/>
    <property type="match status" value="1"/>
</dbReference>
<dbReference type="PROSITE" id="PS01348">
    <property type="entry name" value="MRAY_2"/>
    <property type="match status" value="1"/>
</dbReference>
<sequence>MLEQGLLVTAGVAFLISVALSPLFIPFLRKLKFGQSIRDEGPKSHQKKSGTPTMGGIVIYVSMMVTSLIMAIKFNHLGAEVSLLLLVTFGYGLIGFLDDYIKVVKKRNLGLTSKQKLVGQLVIAIAFFLIGKGQAFHTYIMIPGTDVKFELGWAYFVLVLFMLIGGSNAVNLTDGLDGLLSGTAAIAFGAFSIIAVAQEQFGVAIFCMAVVGAVLGFLVFNANPAKVFMGDTGSLALGGAIAAVAILLKQELLLVIIGGVFVMETLSVIIQVISFKTTGKRVFKMSPLHHHYELCGWSEWRVVVTFWSVGFLLAVLGIYIGVWM</sequence>